<name>YMQ2_CAEEL</name>
<feature type="chain" id="PRO_0000065397" description="Uncharacterized protein K02D10.2">
    <location>
        <begin position="1"/>
        <end position="124"/>
    </location>
</feature>
<feature type="region of interest" description="Disordered" evidence="1">
    <location>
        <begin position="44"/>
        <end position="92"/>
    </location>
</feature>
<feature type="compositionally biased region" description="Polar residues" evidence="1">
    <location>
        <begin position="48"/>
        <end position="58"/>
    </location>
</feature>
<keyword id="KW-1185">Reference proteome</keyword>
<dbReference type="EMBL" id="FO081469">
    <property type="protein sequence ID" value="CCD71827.1"/>
    <property type="molecule type" value="Genomic_DNA"/>
</dbReference>
<dbReference type="PIR" id="S44840">
    <property type="entry name" value="S44840"/>
</dbReference>
<dbReference type="RefSeq" id="NP_498937.1">
    <property type="nucleotide sequence ID" value="NM_066536.2"/>
</dbReference>
<dbReference type="PaxDb" id="6239-K02D10.2"/>
<dbReference type="EnsemblMetazoa" id="K02D10.2.1">
    <property type="protein sequence ID" value="K02D10.2.1"/>
    <property type="gene ID" value="WBGene00019302"/>
</dbReference>
<dbReference type="GeneID" id="186877"/>
<dbReference type="KEGG" id="cel:CELE_K02D10.2"/>
<dbReference type="UCSC" id="K02D10.2">
    <property type="organism name" value="c. elegans"/>
</dbReference>
<dbReference type="AGR" id="WB:WBGene00019302"/>
<dbReference type="CTD" id="186877"/>
<dbReference type="WormBase" id="K02D10.2">
    <property type="protein sequence ID" value="CE00242"/>
    <property type="gene ID" value="WBGene00019302"/>
</dbReference>
<dbReference type="HOGENOM" id="CLU_2005953_0_0_1"/>
<dbReference type="InParanoid" id="P34493"/>
<dbReference type="PRO" id="PR:P34493"/>
<dbReference type="Proteomes" id="UP000001940">
    <property type="component" value="Chromosome III"/>
</dbReference>
<dbReference type="Bgee" id="WBGene00019302">
    <property type="expression patterns" value="Expressed in pharyngeal muscle cell (C elegans) and 3 other cell types or tissues"/>
</dbReference>
<evidence type="ECO:0000256" key="1">
    <source>
        <dbReference type="SAM" id="MobiDB-lite"/>
    </source>
</evidence>
<sequence>MEKNELKVIRGKPEQQKMDISTVEVKNNNIEKLKIGCEAKKTTDRVENSGNGTGSISAPLTDLGPSIGDSHENKGADIPIHPPLDTQSHAKDDDWYDILVITADYEFPKNPANEDVKEERTQGD</sequence>
<protein>
    <recommendedName>
        <fullName>Uncharacterized protein K02D10.2</fullName>
    </recommendedName>
</protein>
<reference key="1">
    <citation type="journal article" date="1994" name="Nature">
        <title>2.2 Mb of contiguous nucleotide sequence from chromosome III of C. elegans.</title>
        <authorList>
            <person name="Wilson R."/>
            <person name="Ainscough R."/>
            <person name="Anderson K."/>
            <person name="Baynes C."/>
            <person name="Berks M."/>
            <person name="Bonfield J."/>
            <person name="Burton J."/>
            <person name="Connell M."/>
            <person name="Copsey T."/>
            <person name="Cooper J."/>
            <person name="Coulson A."/>
            <person name="Craxton M."/>
            <person name="Dear S."/>
            <person name="Du Z."/>
            <person name="Durbin R."/>
            <person name="Favello A."/>
            <person name="Fraser A."/>
            <person name="Fulton L."/>
            <person name="Gardner A."/>
            <person name="Green P."/>
            <person name="Hawkins T."/>
            <person name="Hillier L."/>
            <person name="Jier M."/>
            <person name="Johnston L."/>
            <person name="Jones M."/>
            <person name="Kershaw J."/>
            <person name="Kirsten J."/>
            <person name="Laisster N."/>
            <person name="Latreille P."/>
            <person name="Lightning J."/>
            <person name="Lloyd C."/>
            <person name="Mortimore B."/>
            <person name="O'Callaghan M."/>
            <person name="Parsons J."/>
            <person name="Percy C."/>
            <person name="Rifken L."/>
            <person name="Roopra A."/>
            <person name="Saunders D."/>
            <person name="Shownkeen R."/>
            <person name="Sims M."/>
            <person name="Smaldon N."/>
            <person name="Smith A."/>
            <person name="Smith M."/>
            <person name="Sonnhammer E."/>
            <person name="Staden R."/>
            <person name="Sulston J."/>
            <person name="Thierry-Mieg J."/>
            <person name="Thomas K."/>
            <person name="Vaudin M."/>
            <person name="Vaughan K."/>
            <person name="Waterston R."/>
            <person name="Watson A."/>
            <person name="Weinstock L."/>
            <person name="Wilkinson-Sproat J."/>
            <person name="Wohldman P."/>
        </authorList>
    </citation>
    <scope>NUCLEOTIDE SEQUENCE [LARGE SCALE GENOMIC DNA]</scope>
    <source>
        <strain>Bristol N2</strain>
    </source>
</reference>
<reference key="2">
    <citation type="journal article" date="1998" name="Science">
        <title>Genome sequence of the nematode C. elegans: a platform for investigating biology.</title>
        <authorList>
            <consortium name="The C. elegans sequencing consortium"/>
        </authorList>
    </citation>
    <scope>NUCLEOTIDE SEQUENCE [LARGE SCALE GENOMIC DNA]</scope>
    <source>
        <strain>Bristol N2</strain>
    </source>
</reference>
<gene>
    <name type="ORF">K02D10.2</name>
</gene>
<organism>
    <name type="scientific">Caenorhabditis elegans</name>
    <dbReference type="NCBI Taxonomy" id="6239"/>
    <lineage>
        <taxon>Eukaryota</taxon>
        <taxon>Metazoa</taxon>
        <taxon>Ecdysozoa</taxon>
        <taxon>Nematoda</taxon>
        <taxon>Chromadorea</taxon>
        <taxon>Rhabditida</taxon>
        <taxon>Rhabditina</taxon>
        <taxon>Rhabditomorpha</taxon>
        <taxon>Rhabditoidea</taxon>
        <taxon>Rhabditidae</taxon>
        <taxon>Peloderinae</taxon>
        <taxon>Caenorhabditis</taxon>
    </lineage>
</organism>
<accession>P34493</accession>
<proteinExistence type="predicted"/>